<organismHost>
    <name type="scientific">Equus caballus</name>
    <name type="common">Horse</name>
    <dbReference type="NCBI Taxonomy" id="9796"/>
</organismHost>
<accession>P28892</accession>
<feature type="chain" id="PRO_0000182954" description="Deoxyuridine 5'-triphosphate nucleotidohydrolase">
    <location>
        <begin position="1"/>
        <end position="326"/>
    </location>
</feature>
<feature type="binding site" evidence="1">
    <location>
        <begin position="218"/>
        <end position="220"/>
    </location>
    <ligand>
        <name>substrate</name>
    </ligand>
</feature>
<feature type="binding site" evidence="1">
    <location>
        <begin position="321"/>
        <end position="322"/>
    </location>
    <ligand>
        <name>substrate</name>
    </ligand>
</feature>
<protein>
    <recommendedName>
        <fullName evidence="1">Deoxyuridine 5'-triphosphate nucleotidohydrolase</fullName>
        <shortName evidence="1">dUTPase</shortName>
        <ecNumber evidence="1">3.6.1.23</ecNumber>
    </recommendedName>
    <alternativeName>
        <fullName evidence="1">dUTP pyrophosphatase</fullName>
    </alternativeName>
</protein>
<reference key="1">
    <citation type="journal article" date="1992" name="Virology">
        <title>The DNA sequence of equine herpesvirus-1.</title>
        <authorList>
            <person name="Telford E.A.R."/>
            <person name="Watson M.S."/>
            <person name="McBride K."/>
            <person name="Davison A.J."/>
        </authorList>
    </citation>
    <scope>NUCLEOTIDE SEQUENCE [LARGE SCALE GENOMIC DNA]</scope>
</reference>
<comment type="function">
    <text evidence="1">Involved in nucleotide metabolism: produces dUMP, the immediate precursor of thymidine nucleotides and decreases the intracellular concentration of dUTP to avoid uracil incorporation into viral DNA.</text>
</comment>
<comment type="catalytic activity">
    <reaction evidence="1">
        <text>dUTP + H2O = dUMP + diphosphate + H(+)</text>
        <dbReference type="Rhea" id="RHEA:10248"/>
        <dbReference type="ChEBI" id="CHEBI:15377"/>
        <dbReference type="ChEBI" id="CHEBI:15378"/>
        <dbReference type="ChEBI" id="CHEBI:33019"/>
        <dbReference type="ChEBI" id="CHEBI:61555"/>
        <dbReference type="ChEBI" id="CHEBI:246422"/>
        <dbReference type="EC" id="3.6.1.23"/>
    </reaction>
</comment>
<comment type="cofactor">
    <cofactor evidence="1">
        <name>Mg(2+)</name>
        <dbReference type="ChEBI" id="CHEBI:18420"/>
    </cofactor>
</comment>
<comment type="similarity">
    <text evidence="1">Belongs to the dUTPase family.</text>
</comment>
<keyword id="KW-0378">Hydrolase</keyword>
<keyword id="KW-0460">Magnesium</keyword>
<keyword id="KW-0479">Metal-binding</keyword>
<keyword id="KW-0546">Nucleotide metabolism</keyword>
<keyword id="KW-1185">Reference proteome</keyword>
<proteinExistence type="inferred from homology"/>
<organism>
    <name type="scientific">Equine herpesvirus 1 (strain Ab4p)</name>
    <name type="common">EHV-1</name>
    <name type="synonym">Equine abortion virus</name>
    <dbReference type="NCBI Taxonomy" id="31520"/>
    <lineage>
        <taxon>Viruses</taxon>
        <taxon>Duplodnaviria</taxon>
        <taxon>Heunggongvirae</taxon>
        <taxon>Peploviricota</taxon>
        <taxon>Herviviricetes</taxon>
        <taxon>Herpesvirales</taxon>
        <taxon>Orthoherpesviridae</taxon>
        <taxon>Alphaherpesvirinae</taxon>
        <taxon>Varicellovirus</taxon>
        <taxon>Varicellovirus equidalpha1</taxon>
        <taxon>Equid alphaherpesvirus 1</taxon>
    </lineage>
</organism>
<name>DUT_EHV1B</name>
<dbReference type="EC" id="3.6.1.23" evidence="1"/>
<dbReference type="EMBL" id="AY665713">
    <property type="protein sequence ID" value="AAT67266.1"/>
    <property type="molecule type" value="Genomic_DNA"/>
</dbReference>
<dbReference type="PIR" id="A36796">
    <property type="entry name" value="WZBEA8"/>
</dbReference>
<dbReference type="SMR" id="P28892"/>
<dbReference type="KEGG" id="vg:1487564"/>
<dbReference type="Proteomes" id="UP000001189">
    <property type="component" value="Segment"/>
</dbReference>
<dbReference type="GO" id="GO:0004170">
    <property type="term" value="F:dUTP diphosphatase activity"/>
    <property type="evidence" value="ECO:0007669"/>
    <property type="project" value="UniProtKB-EC"/>
</dbReference>
<dbReference type="GO" id="GO:0046872">
    <property type="term" value="F:metal ion binding"/>
    <property type="evidence" value="ECO:0007669"/>
    <property type="project" value="UniProtKB-KW"/>
</dbReference>
<dbReference type="GO" id="GO:0046080">
    <property type="term" value="P:dUTP metabolic process"/>
    <property type="evidence" value="ECO:0007669"/>
    <property type="project" value="InterPro"/>
</dbReference>
<dbReference type="CDD" id="cd07557">
    <property type="entry name" value="trimeric_dUTPase"/>
    <property type="match status" value="1"/>
</dbReference>
<dbReference type="Gene3D" id="2.70.40.10">
    <property type="match status" value="1"/>
</dbReference>
<dbReference type="HAMAP" id="MF_04031">
    <property type="entry name" value="HSV_DUT"/>
    <property type="match status" value="1"/>
</dbReference>
<dbReference type="InterPro" id="IPR029054">
    <property type="entry name" value="dUTPase-like"/>
</dbReference>
<dbReference type="InterPro" id="IPR036157">
    <property type="entry name" value="dUTPase-like_sf"/>
</dbReference>
<dbReference type="InterPro" id="IPR033704">
    <property type="entry name" value="dUTPase_trimeric"/>
</dbReference>
<dbReference type="InterPro" id="IPR034745">
    <property type="entry name" value="HSV_DUT"/>
</dbReference>
<dbReference type="Pfam" id="PF00692">
    <property type="entry name" value="dUTPase"/>
    <property type="match status" value="1"/>
</dbReference>
<dbReference type="SUPFAM" id="SSF51283">
    <property type="entry name" value="dUTPase-like"/>
    <property type="match status" value="1"/>
</dbReference>
<gene>
    <name evidence="1" type="primary">DUT</name>
    <name type="ordered locus">9</name>
</gene>
<sequence>MASVTNLVDSIVVVECGERWRARAEAAGRLLVLINNHTVELSGEHGSAGEFYSVLTDVGVRVACSSGYAIVLTQISGLLPVEPEPGNFSNVTFPENSAKYYTAYGIVDSGYRGVVKAVQFAPGINTSVPPGQMSLGLVLVKLARKSIHVTSIGSTRDGRTSEANLFYDYFAPKRVEDAGYDISAPEDATIDPDESHFVDLPIVFANSNPAVTPCIFGRSSMNRRGLIVLPTRWVAGRTCCFFILNVNKYPVSITKGQRVAQLLLTEDIDDALIPPTVNYDNPFPTYSPSESTKAPQSPVLWKFTTDFDREAPSSLRADGGFGSTGL</sequence>
<evidence type="ECO:0000255" key="1">
    <source>
        <dbReference type="HAMAP-Rule" id="MF_04031"/>
    </source>
</evidence>